<evidence type="ECO:0000250" key="1">
    <source>
        <dbReference type="UniProtKB" id="Q82P90"/>
    </source>
</evidence>
<evidence type="ECO:0000255" key="2"/>
<evidence type="ECO:0000255" key="3">
    <source>
        <dbReference type="PROSITE-ProRule" id="PRU00498"/>
    </source>
</evidence>
<evidence type="ECO:0000269" key="4">
    <source>
    </source>
</evidence>
<evidence type="ECO:0000269" key="5">
    <source>
    </source>
</evidence>
<evidence type="ECO:0000303" key="6">
    <source>
    </source>
</evidence>
<evidence type="ECO:0000303" key="7">
    <source>
    </source>
</evidence>
<evidence type="ECO:0000305" key="8"/>
<evidence type="ECO:0000305" key="9">
    <source>
    </source>
</evidence>
<dbReference type="EC" id="3.2.1.55" evidence="5"/>
<dbReference type="EMBL" id="CM001231">
    <property type="protein sequence ID" value="EHA56950.1"/>
    <property type="molecule type" value="Genomic_DNA"/>
</dbReference>
<dbReference type="RefSeq" id="XP_003709562.1">
    <property type="nucleotide sequence ID" value="XM_003709514.1"/>
</dbReference>
<dbReference type="SMR" id="G4MMH2"/>
<dbReference type="STRING" id="242507.G4MMH2"/>
<dbReference type="CAZy" id="CBM42">
    <property type="family name" value="Carbohydrate-Binding Module Family 42"/>
</dbReference>
<dbReference type="CAZy" id="GH43">
    <property type="family name" value="Glycoside Hydrolase Family 43"/>
</dbReference>
<dbReference type="GlyCosmos" id="G4MMH2">
    <property type="glycosylation" value="4 sites, No reported glycans"/>
</dbReference>
<dbReference type="EnsemblFungi" id="MGG_06843T0">
    <property type="protein sequence ID" value="MGG_06843T0"/>
    <property type="gene ID" value="MGG_06843"/>
</dbReference>
<dbReference type="GeneID" id="2685016"/>
<dbReference type="KEGG" id="mgr:MGG_06843"/>
<dbReference type="VEuPathDB" id="FungiDB:MGG_06843"/>
<dbReference type="eggNOG" id="ENOG502R8XS">
    <property type="taxonomic scope" value="Eukaryota"/>
</dbReference>
<dbReference type="HOGENOM" id="CLU_009397_2_1_1"/>
<dbReference type="InParanoid" id="G4MMH2"/>
<dbReference type="OMA" id="WRIRAFV"/>
<dbReference type="OrthoDB" id="272289at2759"/>
<dbReference type="UniPathway" id="UPA00667"/>
<dbReference type="Proteomes" id="UP000009058">
    <property type="component" value="Chromosome 1"/>
</dbReference>
<dbReference type="GO" id="GO:0005576">
    <property type="term" value="C:extracellular region"/>
    <property type="evidence" value="ECO:0007669"/>
    <property type="project" value="UniProtKB-SubCell"/>
</dbReference>
<dbReference type="GO" id="GO:0046556">
    <property type="term" value="F:alpha-L-arabinofuranosidase activity"/>
    <property type="evidence" value="ECO:0007669"/>
    <property type="project" value="UniProtKB-EC"/>
</dbReference>
<dbReference type="GO" id="GO:0031222">
    <property type="term" value="P:arabinan catabolic process"/>
    <property type="evidence" value="ECO:0007669"/>
    <property type="project" value="UniProtKB-UniPathway"/>
</dbReference>
<dbReference type="GO" id="GO:0046373">
    <property type="term" value="P:L-arabinose metabolic process"/>
    <property type="evidence" value="ECO:0007669"/>
    <property type="project" value="InterPro"/>
</dbReference>
<dbReference type="CDD" id="cd23265">
    <property type="entry name" value="beta-trefoil_ABD_ABFB-like"/>
    <property type="match status" value="1"/>
</dbReference>
<dbReference type="Gene3D" id="2.80.10.50">
    <property type="match status" value="1"/>
</dbReference>
<dbReference type="Gene3D" id="2.115.10.20">
    <property type="entry name" value="Glycosyl hydrolase domain, family 43"/>
    <property type="match status" value="1"/>
</dbReference>
<dbReference type="InterPro" id="IPR007934">
    <property type="entry name" value="AbfB_ABD"/>
</dbReference>
<dbReference type="InterPro" id="IPR036195">
    <property type="entry name" value="AbfB_ABD_sf"/>
</dbReference>
<dbReference type="InterPro" id="IPR006710">
    <property type="entry name" value="Glyco_hydro_43"/>
</dbReference>
<dbReference type="InterPro" id="IPR023296">
    <property type="entry name" value="Glyco_hydro_beta-prop_sf"/>
</dbReference>
<dbReference type="PANTHER" id="PTHR43817">
    <property type="entry name" value="GLYCOSYL HYDROLASE"/>
    <property type="match status" value="1"/>
</dbReference>
<dbReference type="PANTHER" id="PTHR43817:SF1">
    <property type="entry name" value="HYDROLASE, FAMILY 43, PUTATIVE (AFU_ORTHOLOGUE AFUA_3G01660)-RELATED"/>
    <property type="match status" value="1"/>
</dbReference>
<dbReference type="Pfam" id="PF05270">
    <property type="entry name" value="AbfB"/>
    <property type="match status" value="1"/>
</dbReference>
<dbReference type="Pfam" id="PF04616">
    <property type="entry name" value="Glyco_hydro_43"/>
    <property type="match status" value="1"/>
</dbReference>
<dbReference type="SUPFAM" id="SSF110221">
    <property type="entry name" value="AbfB domain"/>
    <property type="match status" value="1"/>
</dbReference>
<dbReference type="SUPFAM" id="SSF75005">
    <property type="entry name" value="Arabinanase/levansucrase/invertase"/>
    <property type="match status" value="1"/>
</dbReference>
<organism>
    <name type="scientific">Pyricularia oryzae (strain 70-15 / ATCC MYA-4617 / FGSC 8958)</name>
    <name type="common">Rice blast fungus</name>
    <name type="synonym">Magnaporthe oryzae</name>
    <dbReference type="NCBI Taxonomy" id="242507"/>
    <lineage>
        <taxon>Eukaryota</taxon>
        <taxon>Fungi</taxon>
        <taxon>Dikarya</taxon>
        <taxon>Ascomycota</taxon>
        <taxon>Pezizomycotina</taxon>
        <taxon>Sordariomycetes</taxon>
        <taxon>Sordariomycetidae</taxon>
        <taxon>Magnaporthales</taxon>
        <taxon>Pyriculariaceae</taxon>
        <taxon>Pyricularia</taxon>
    </lineage>
</organism>
<feature type="signal peptide" evidence="2">
    <location>
        <begin position="1"/>
        <end position="25"/>
    </location>
</feature>
<feature type="chain" id="PRO_5003465844" description="Alpha-L-arabinofuranosidase B">
    <location>
        <begin position="26"/>
        <end position="486"/>
    </location>
</feature>
<feature type="region of interest" description="Catalytic" evidence="2">
    <location>
        <begin position="45"/>
        <end position="342"/>
    </location>
</feature>
<feature type="region of interest" description="ABD" evidence="2">
    <location>
        <begin position="359"/>
        <end position="467"/>
    </location>
</feature>
<feature type="active site" description="Proton acceptor" evidence="1">
    <location>
        <position position="51"/>
    </location>
</feature>
<feature type="active site" description="Proton donor" evidence="1">
    <location>
        <position position="229"/>
    </location>
</feature>
<feature type="site" description="Important for catalytic activity, responsible for pKa modulation of the active site Glu and correct orientation of both the proton donor and substrate" evidence="1">
    <location>
        <position position="166"/>
    </location>
</feature>
<feature type="glycosylation site" description="N-linked (GlcNAc...) asparagine" evidence="3">
    <location>
        <position position="42"/>
    </location>
</feature>
<feature type="glycosylation site" description="N-linked (GlcNAc...) asparagine" evidence="3">
    <location>
        <position position="302"/>
    </location>
</feature>
<feature type="glycosylation site" description="N-linked (GlcNAc...) asparagine" evidence="3">
    <location>
        <position position="416"/>
    </location>
</feature>
<feature type="glycosylation site" description="N-linked (GlcNAc...) asparagine" evidence="3">
    <location>
        <position position="426"/>
    </location>
</feature>
<gene>
    <name evidence="6" type="primary">abfB</name>
    <name type="ORF">MGG_06843</name>
</gene>
<keyword id="KW-0119">Carbohydrate metabolism</keyword>
<keyword id="KW-0325">Glycoprotein</keyword>
<keyword id="KW-0326">Glycosidase</keyword>
<keyword id="KW-0378">Hydrolase</keyword>
<keyword id="KW-1185">Reference proteome</keyword>
<keyword id="KW-0964">Secreted</keyword>
<keyword id="KW-0732">Signal</keyword>
<name>ABFB_PYRO7</name>
<reference key="1">
    <citation type="journal article" date="2005" name="Nature">
        <title>The genome sequence of the rice blast fungus Magnaporthe grisea.</title>
        <authorList>
            <person name="Dean R.A."/>
            <person name="Talbot N.J."/>
            <person name="Ebbole D.J."/>
            <person name="Farman M.L."/>
            <person name="Mitchell T.K."/>
            <person name="Orbach M.J."/>
            <person name="Thon M.R."/>
            <person name="Kulkarni R."/>
            <person name="Xu J.-R."/>
            <person name="Pan H."/>
            <person name="Read N.D."/>
            <person name="Lee Y.-H."/>
            <person name="Carbone I."/>
            <person name="Brown D."/>
            <person name="Oh Y.Y."/>
            <person name="Donofrio N."/>
            <person name="Jeong J.S."/>
            <person name="Soanes D.M."/>
            <person name="Djonovic S."/>
            <person name="Kolomiets E."/>
            <person name="Rehmeyer C."/>
            <person name="Li W."/>
            <person name="Harding M."/>
            <person name="Kim S."/>
            <person name="Lebrun M.-H."/>
            <person name="Bohnert H."/>
            <person name="Coughlan S."/>
            <person name="Butler J."/>
            <person name="Calvo S.E."/>
            <person name="Ma L.-J."/>
            <person name="Nicol R."/>
            <person name="Purcell S."/>
            <person name="Nusbaum C."/>
            <person name="Galagan J.E."/>
            <person name="Birren B.W."/>
        </authorList>
    </citation>
    <scope>NUCLEOTIDE SEQUENCE [LARGE SCALE GENOMIC DNA]</scope>
    <source>
        <strain>70-15 / ATCC MYA-4617 / FGSC 8958</strain>
    </source>
</reference>
<reference key="2">
    <citation type="journal article" date="2013" name="J. Proteomics">
        <title>In-depth insight into in vivo apoplastic secretome of rice-Magnaporthe oryzae interaction.</title>
        <authorList>
            <person name="Kim S.G."/>
            <person name="Wang Y."/>
            <person name="Lee K.H."/>
            <person name="Park Z.Y."/>
            <person name="Park J."/>
            <person name="Wu J."/>
            <person name="Kwon S.J."/>
            <person name="Lee Y.H."/>
            <person name="Agrawal G.K."/>
            <person name="Rakwal R."/>
            <person name="Kim S.T."/>
            <person name="Kang K.Y."/>
        </authorList>
    </citation>
    <scope>SUBCELLULAR LOCATION [LARGE SCALE ANALYSIS]</scope>
    <scope>IDENTIFICATION BY MASS SPECTROMETRY</scope>
</reference>
<reference key="3">
    <citation type="journal article" date="2016" name="PLoS ONE">
        <title>Secreted alpha-N-arabinofuranosidase B protein is required for the full virulence of Magnaporthe oryzae and triggers host defences.</title>
        <authorList>
            <person name="Wu J."/>
            <person name="Wang Y."/>
            <person name="Park S.Y."/>
            <person name="Kim S.G."/>
            <person name="Yoo J.S."/>
            <person name="Park S."/>
            <person name="Gupta R."/>
            <person name="Kang K.Y."/>
            <person name="Kim S.T."/>
        </authorList>
    </citation>
    <scope>FUNCTION</scope>
    <scope>SUBCELLULAR LOCATION</scope>
    <scope>DISRUPTION PHENOTYPE</scope>
</reference>
<accession>G4MMH2</accession>
<sequence>MLSLKAVLRFASVAVAVVLPTLAQAQAPEPSLSVRSPPVSYNNTLVKQRADPQILKHTNGRYYFIATVPEYDRVVMRQADSIQGLSTAEERLIWARSQSKAGVGYVWAPELHKIGDKWYIYFALGRTAPFDVRPFVLEGTGSDDPMAASWAEKGFITTDFDTFSLDATTFEVNGVRYLSWAQADPRFDNGGGTSLFLARMTNPWTIQRPSIVISRPDQPWERIGHNVNEGSWGMVRNGKVFVTYSAAATDANYCMGLLTADQNADLMNPASWSKSKDPVFVSNTATSQFGPGHSAFTVSDDNQSDVLVYHARQYKDIRGEPLDNPDRMTRVQKLYWRSDGTPDFGIPIPDGPHPVRLRSSADQTLYVGIANNAVQSVKDAPVQNTQFKIVEPGLGGSGTISFESTAQPGKYLSAANGSVSLATLSNTSDAGARSSASFRRVAGLSDATGVSFESAAQAGSYLVSGGNGAAVSVAPSTGAEATFYLE</sequence>
<protein>
    <recommendedName>
        <fullName evidence="8">Alpha-L-arabinofuranosidase B</fullName>
        <ecNumber evidence="5">3.2.1.55</ecNumber>
    </recommendedName>
    <alternativeName>
        <fullName evidence="7">Alpha-N-arabinofuranosidase B</fullName>
    </alternativeName>
</protein>
<proteinExistence type="evidence at protein level"/>
<comment type="function">
    <text evidence="5">Secreted arabinofuranosidase that causes degradation of rice cell wall components during infection. Required for virulence.</text>
</comment>
<comment type="catalytic activity">
    <reaction evidence="5">
        <text>Hydrolysis of terminal non-reducing alpha-L-arabinofuranoside residues in alpha-L-arabinosides.</text>
        <dbReference type="EC" id="3.2.1.55"/>
    </reaction>
</comment>
<comment type="biophysicochemical properties">
    <kinetics>
        <KM evidence="5">1.206 uM for p-nitrophenyl-alpha-1-arabinofuranoside</KM>
        <text evidence="5">kcat is 0.9148 sec(-1) with p-nitrophenyl-alpha-1-arabinofuranoside as substrate.</text>
    </kinetics>
</comment>
<comment type="pathway">
    <text evidence="9">Glycan metabolism; L-arabinan degradation.</text>
</comment>
<comment type="subcellular location">
    <subcellularLocation>
        <location evidence="4 5">Secreted</location>
    </subcellularLocation>
    <text evidence="4 5">Secreted during fungal infection into the apoplastic space of host plant (PubMed:23159799, PubMed:27764242). Only accumulates in rice leaves during compatible fungal infection (PubMed:27764242).</text>
</comment>
<comment type="domain">
    <text evidence="8">Organized into two domains: an N-terminal catalytic domain and a C-terminal arabinose-binding domain (ABD).</text>
</comment>
<comment type="disruption phenotype">
    <text evidence="5">Significantly reduces vegetative growth and conidiation, but no difference in germination and appressorium formation compared to wild-type. Significantly reduces virulence.</text>
</comment>
<comment type="similarity">
    <text evidence="8">Belongs to the glycosyl hydrolase 43 family.</text>
</comment>